<dbReference type="EMBL" id="CP001365">
    <property type="protein sequence ID" value="ACM56967.1"/>
    <property type="molecule type" value="Genomic_DNA"/>
</dbReference>
<dbReference type="RefSeq" id="WP_015910109.1">
    <property type="nucleotide sequence ID" value="NC_012029.1"/>
</dbReference>
<dbReference type="SMR" id="B9LNM9"/>
<dbReference type="GeneID" id="7400697"/>
<dbReference type="KEGG" id="hla:Hlac_1378"/>
<dbReference type="eggNOG" id="arCOG00355">
    <property type="taxonomic scope" value="Archaea"/>
</dbReference>
<dbReference type="HOGENOM" id="CLU_033732_3_0_2"/>
<dbReference type="Proteomes" id="UP000000740">
    <property type="component" value="Chromosome 1"/>
</dbReference>
<dbReference type="GO" id="GO:0005525">
    <property type="term" value="F:GTP binding"/>
    <property type="evidence" value="ECO:0007669"/>
    <property type="project" value="UniProtKB-UniRule"/>
</dbReference>
<dbReference type="GO" id="GO:0046872">
    <property type="term" value="F:metal ion binding"/>
    <property type="evidence" value="ECO:0007669"/>
    <property type="project" value="UniProtKB-KW"/>
</dbReference>
<dbReference type="GO" id="GO:0051301">
    <property type="term" value="P:cell division"/>
    <property type="evidence" value="ECO:0007669"/>
    <property type="project" value="UniProtKB-KW"/>
</dbReference>
<dbReference type="CDD" id="cd01876">
    <property type="entry name" value="YihA_EngB"/>
    <property type="match status" value="1"/>
</dbReference>
<dbReference type="Gene3D" id="3.40.50.300">
    <property type="entry name" value="P-loop containing nucleotide triphosphate hydrolases"/>
    <property type="match status" value="1"/>
</dbReference>
<dbReference type="HAMAP" id="MF_00321">
    <property type="entry name" value="GTPase_EngB"/>
    <property type="match status" value="1"/>
</dbReference>
<dbReference type="InterPro" id="IPR030393">
    <property type="entry name" value="G_ENGB_dom"/>
</dbReference>
<dbReference type="InterPro" id="IPR006073">
    <property type="entry name" value="GTP-bd"/>
</dbReference>
<dbReference type="InterPro" id="IPR019987">
    <property type="entry name" value="GTP-bd_ribosome_bio_YsxC"/>
</dbReference>
<dbReference type="InterPro" id="IPR027417">
    <property type="entry name" value="P-loop_NTPase"/>
</dbReference>
<dbReference type="InterPro" id="IPR005225">
    <property type="entry name" value="Small_GTP-bd"/>
</dbReference>
<dbReference type="NCBIfam" id="NF003255">
    <property type="entry name" value="PRK04213.1"/>
    <property type="match status" value="1"/>
</dbReference>
<dbReference type="NCBIfam" id="TIGR00231">
    <property type="entry name" value="small_GTP"/>
    <property type="match status" value="1"/>
</dbReference>
<dbReference type="PANTHER" id="PTHR11649:SF13">
    <property type="entry name" value="ENGB-TYPE G DOMAIN-CONTAINING PROTEIN"/>
    <property type="match status" value="1"/>
</dbReference>
<dbReference type="PANTHER" id="PTHR11649">
    <property type="entry name" value="MSS1/TRME-RELATED GTP-BINDING PROTEIN"/>
    <property type="match status" value="1"/>
</dbReference>
<dbReference type="Pfam" id="PF01926">
    <property type="entry name" value="MMR_HSR1"/>
    <property type="match status" value="1"/>
</dbReference>
<dbReference type="SUPFAM" id="SSF52540">
    <property type="entry name" value="P-loop containing nucleoside triphosphate hydrolases"/>
    <property type="match status" value="1"/>
</dbReference>
<dbReference type="PROSITE" id="PS51706">
    <property type="entry name" value="G_ENGB"/>
    <property type="match status" value="1"/>
</dbReference>
<accession>B9LNM9</accession>
<keyword id="KW-0131">Cell cycle</keyword>
<keyword id="KW-0132">Cell division</keyword>
<keyword id="KW-0342">GTP-binding</keyword>
<keyword id="KW-0460">Magnesium</keyword>
<keyword id="KW-0479">Metal-binding</keyword>
<keyword id="KW-0547">Nucleotide-binding</keyword>
<keyword id="KW-1185">Reference proteome</keyword>
<keyword id="KW-0717">Septation</keyword>
<sequence>MFEDRPDRDAEVVLVGRSNVGKSTLMRELTGHDFSTGGKPGVTRQPNHFDWASESFMFTDLPGFGFMSGVEEEHREAIKTNIVRYLEENADSILAGVVVMDGKAAVDIIDRHAERGNIPHDVEMFGFLEDVGVEPIVAVNKTDKIDDLDERLDEICDRLGLYPPWQQWSDQIAPICAKRGDIEALEECLRTRFHEHNRDDLLKFVS</sequence>
<reference key="1">
    <citation type="journal article" date="2016" name="Stand. Genomic Sci.">
        <title>Complete genome sequence of the Antarctic Halorubrum lacusprofundi type strain ACAM 34.</title>
        <authorList>
            <person name="Anderson I.J."/>
            <person name="DasSarma P."/>
            <person name="Lucas S."/>
            <person name="Copeland A."/>
            <person name="Lapidus A."/>
            <person name="Del Rio T.G."/>
            <person name="Tice H."/>
            <person name="Dalin E."/>
            <person name="Bruce D.C."/>
            <person name="Goodwin L."/>
            <person name="Pitluck S."/>
            <person name="Sims D."/>
            <person name="Brettin T.S."/>
            <person name="Detter J.C."/>
            <person name="Han C.S."/>
            <person name="Larimer F."/>
            <person name="Hauser L."/>
            <person name="Land M."/>
            <person name="Ivanova N."/>
            <person name="Richardson P."/>
            <person name="Cavicchioli R."/>
            <person name="DasSarma S."/>
            <person name="Woese C.R."/>
            <person name="Kyrpides N.C."/>
        </authorList>
    </citation>
    <scope>NUCLEOTIDE SEQUENCE [LARGE SCALE GENOMIC DNA]</scope>
    <source>
        <strain>ATCC 49239 / DSM 5036 / JCM 8891 / ACAM 34</strain>
    </source>
</reference>
<comment type="function">
    <text evidence="1">Necessary for normal cell division and for the maintenance of normal septation.</text>
</comment>
<comment type="cofactor">
    <cofactor evidence="1">
        <name>Mg(2+)</name>
        <dbReference type="ChEBI" id="CHEBI:18420"/>
    </cofactor>
</comment>
<comment type="similarity">
    <text evidence="1">Belongs to the TRAFAC class TrmE-Era-EngA-EngB-Septin-like GTPase superfamily. EngB GTPase family.</text>
</comment>
<gene>
    <name evidence="1" type="primary">engB</name>
    <name type="ordered locus">Hlac_1378</name>
</gene>
<proteinExistence type="inferred from homology"/>
<feature type="chain" id="PRO_1000189946" description="Probable GTP-binding protein EngB">
    <location>
        <begin position="1"/>
        <end position="206"/>
    </location>
</feature>
<feature type="domain" description="EngB-type G" evidence="1">
    <location>
        <begin position="8"/>
        <end position="195"/>
    </location>
</feature>
<feature type="binding site" evidence="1">
    <location>
        <begin position="16"/>
        <end position="23"/>
    </location>
    <ligand>
        <name>GTP</name>
        <dbReference type="ChEBI" id="CHEBI:37565"/>
    </ligand>
</feature>
<feature type="binding site" evidence="1">
    <location>
        <position position="23"/>
    </location>
    <ligand>
        <name>Mg(2+)</name>
        <dbReference type="ChEBI" id="CHEBI:18420"/>
    </ligand>
</feature>
<feature type="binding site" evidence="1">
    <location>
        <begin position="41"/>
        <end position="45"/>
    </location>
    <ligand>
        <name>GTP</name>
        <dbReference type="ChEBI" id="CHEBI:37565"/>
    </ligand>
</feature>
<feature type="binding site" evidence="1">
    <location>
        <position position="43"/>
    </location>
    <ligand>
        <name>Mg(2+)</name>
        <dbReference type="ChEBI" id="CHEBI:18420"/>
    </ligand>
</feature>
<feature type="binding site" evidence="1">
    <location>
        <begin position="60"/>
        <end position="63"/>
    </location>
    <ligand>
        <name>GTP</name>
        <dbReference type="ChEBI" id="CHEBI:37565"/>
    </ligand>
</feature>
<feature type="binding site" evidence="1">
    <location>
        <begin position="140"/>
        <end position="143"/>
    </location>
    <ligand>
        <name>GTP</name>
        <dbReference type="ChEBI" id="CHEBI:37565"/>
    </ligand>
</feature>
<feature type="binding site" evidence="1">
    <location>
        <begin position="175"/>
        <end position="177"/>
    </location>
    <ligand>
        <name>GTP</name>
        <dbReference type="ChEBI" id="CHEBI:37565"/>
    </ligand>
</feature>
<organism>
    <name type="scientific">Halorubrum lacusprofundi (strain ATCC 49239 / DSM 5036 / JCM 8891 / ACAM 34)</name>
    <dbReference type="NCBI Taxonomy" id="416348"/>
    <lineage>
        <taxon>Archaea</taxon>
        <taxon>Methanobacteriati</taxon>
        <taxon>Methanobacteriota</taxon>
        <taxon>Stenosarchaea group</taxon>
        <taxon>Halobacteria</taxon>
        <taxon>Halobacteriales</taxon>
        <taxon>Haloferacaceae</taxon>
        <taxon>Halorubrum</taxon>
    </lineage>
</organism>
<name>ENGB_HALLT</name>
<evidence type="ECO:0000255" key="1">
    <source>
        <dbReference type="HAMAP-Rule" id="MF_00321"/>
    </source>
</evidence>
<protein>
    <recommendedName>
        <fullName evidence="1">Probable GTP-binding protein EngB</fullName>
    </recommendedName>
</protein>